<organism>
    <name type="scientific">Rickettsia prowazekii (strain Madrid E)</name>
    <dbReference type="NCBI Taxonomy" id="272947"/>
    <lineage>
        <taxon>Bacteria</taxon>
        <taxon>Pseudomonadati</taxon>
        <taxon>Pseudomonadota</taxon>
        <taxon>Alphaproteobacteria</taxon>
        <taxon>Rickettsiales</taxon>
        <taxon>Rickettsiaceae</taxon>
        <taxon>Rickettsieae</taxon>
        <taxon>Rickettsia</taxon>
        <taxon>typhus group</taxon>
    </lineage>
</organism>
<name>KGUA_RICPR</name>
<proteinExistence type="inferred from homology"/>
<evidence type="ECO:0000250" key="1"/>
<evidence type="ECO:0000305" key="2"/>
<reference key="1">
    <citation type="journal article" date="1998" name="Nature">
        <title>The genome sequence of Rickettsia prowazekii and the origin of mitochondria.</title>
        <authorList>
            <person name="Andersson S.G.E."/>
            <person name="Zomorodipour A."/>
            <person name="Andersson J.O."/>
            <person name="Sicheritz-Ponten T."/>
            <person name="Alsmark U.C.M."/>
            <person name="Podowski R.M."/>
            <person name="Naeslund A.K."/>
            <person name="Eriksson A.-S."/>
            <person name="Winkler H.H."/>
            <person name="Kurland C.G."/>
        </authorList>
    </citation>
    <scope>NUCLEOTIDE SEQUENCE [LARGE SCALE GENOMIC DNA]</scope>
    <source>
        <strain>Madrid E</strain>
    </source>
</reference>
<protein>
    <recommendedName>
        <fullName>Guanylate kinase</fullName>
        <ecNumber>2.7.4.8</ecNumber>
    </recommendedName>
    <alternativeName>
        <fullName>GMP kinase</fullName>
    </alternativeName>
</protein>
<dbReference type="EC" id="2.7.4.8"/>
<dbReference type="EMBL" id="AJ235273">
    <property type="protein sequence ID" value="CAA15193.1"/>
    <property type="molecule type" value="Genomic_DNA"/>
</dbReference>
<dbReference type="PIR" id="A71637">
    <property type="entry name" value="A71637"/>
</dbReference>
<dbReference type="RefSeq" id="NP_221117.1">
    <property type="nucleotide sequence ID" value="NC_000963.1"/>
</dbReference>
<dbReference type="RefSeq" id="WP_004599646.1">
    <property type="nucleotide sequence ID" value="NC_000963.1"/>
</dbReference>
<dbReference type="SMR" id="Q9ZCH7"/>
<dbReference type="STRING" id="272947.gene:17555835"/>
<dbReference type="EnsemblBacteria" id="CAA15193">
    <property type="protein sequence ID" value="CAA15193"/>
    <property type="gene ID" value="CAA15193"/>
</dbReference>
<dbReference type="GeneID" id="57569888"/>
<dbReference type="KEGG" id="rpr:RP765"/>
<dbReference type="PATRIC" id="fig|272947.5.peg.801"/>
<dbReference type="eggNOG" id="COG0194">
    <property type="taxonomic scope" value="Bacteria"/>
</dbReference>
<dbReference type="HOGENOM" id="CLU_001715_1_0_5"/>
<dbReference type="OrthoDB" id="9808150at2"/>
<dbReference type="Proteomes" id="UP000002480">
    <property type="component" value="Chromosome"/>
</dbReference>
<dbReference type="GO" id="GO:0005829">
    <property type="term" value="C:cytosol"/>
    <property type="evidence" value="ECO:0007669"/>
    <property type="project" value="TreeGrafter"/>
</dbReference>
<dbReference type="GO" id="GO:0005524">
    <property type="term" value="F:ATP binding"/>
    <property type="evidence" value="ECO:0007669"/>
    <property type="project" value="UniProtKB-UniRule"/>
</dbReference>
<dbReference type="GO" id="GO:0004385">
    <property type="term" value="F:guanylate kinase activity"/>
    <property type="evidence" value="ECO:0007669"/>
    <property type="project" value="UniProtKB-UniRule"/>
</dbReference>
<dbReference type="CDD" id="cd00071">
    <property type="entry name" value="GMPK"/>
    <property type="match status" value="1"/>
</dbReference>
<dbReference type="FunFam" id="3.30.63.10:FF:000002">
    <property type="entry name" value="Guanylate kinase 1"/>
    <property type="match status" value="1"/>
</dbReference>
<dbReference type="Gene3D" id="3.30.63.10">
    <property type="entry name" value="Guanylate Kinase phosphate binding domain"/>
    <property type="match status" value="1"/>
</dbReference>
<dbReference type="Gene3D" id="3.40.50.300">
    <property type="entry name" value="P-loop containing nucleotide triphosphate hydrolases"/>
    <property type="match status" value="1"/>
</dbReference>
<dbReference type="HAMAP" id="MF_00328">
    <property type="entry name" value="Guanylate_kinase"/>
    <property type="match status" value="1"/>
</dbReference>
<dbReference type="InterPro" id="IPR008145">
    <property type="entry name" value="GK/Ca_channel_bsu"/>
</dbReference>
<dbReference type="InterPro" id="IPR008144">
    <property type="entry name" value="Guanylate_kin-like_dom"/>
</dbReference>
<dbReference type="InterPro" id="IPR017665">
    <property type="entry name" value="Guanylate_kinase"/>
</dbReference>
<dbReference type="InterPro" id="IPR020590">
    <property type="entry name" value="Guanylate_kinase_CS"/>
</dbReference>
<dbReference type="InterPro" id="IPR027417">
    <property type="entry name" value="P-loop_NTPase"/>
</dbReference>
<dbReference type="NCBIfam" id="TIGR03263">
    <property type="entry name" value="guanyl_kin"/>
    <property type="match status" value="1"/>
</dbReference>
<dbReference type="PANTHER" id="PTHR23117:SF13">
    <property type="entry name" value="GUANYLATE KINASE"/>
    <property type="match status" value="1"/>
</dbReference>
<dbReference type="PANTHER" id="PTHR23117">
    <property type="entry name" value="GUANYLATE KINASE-RELATED"/>
    <property type="match status" value="1"/>
</dbReference>
<dbReference type="Pfam" id="PF00625">
    <property type="entry name" value="Guanylate_kin"/>
    <property type="match status" value="1"/>
</dbReference>
<dbReference type="SMART" id="SM00072">
    <property type="entry name" value="GuKc"/>
    <property type="match status" value="1"/>
</dbReference>
<dbReference type="SUPFAM" id="SSF52540">
    <property type="entry name" value="P-loop containing nucleoside triphosphate hydrolases"/>
    <property type="match status" value="1"/>
</dbReference>
<dbReference type="PROSITE" id="PS00856">
    <property type="entry name" value="GUANYLATE_KINASE_1"/>
    <property type="match status" value="1"/>
</dbReference>
<dbReference type="PROSITE" id="PS50052">
    <property type="entry name" value="GUANYLATE_KINASE_2"/>
    <property type="match status" value="1"/>
</dbReference>
<accession>Q9ZCH7</accession>
<sequence>MKFKNKGLIIILSSPSGTGKSSLAKELLKIDNNLRLSISVTTRKPRLGEVDGINYYFKSDREFKTLVKQNKFLEYAKIYNDYYGTPKEYVKMLLKQGFDVLFDIDWQGVRSIKKNTNNVITIFILPPSIEILEQRLRNRATDNEETIKLRMQSAQNEISHANEYDYVVINDDFSQTLKKIHEIIVAERAKNFAYHEY</sequence>
<keyword id="KW-0067">ATP-binding</keyword>
<keyword id="KW-0963">Cytoplasm</keyword>
<keyword id="KW-0418">Kinase</keyword>
<keyword id="KW-0547">Nucleotide-binding</keyword>
<keyword id="KW-1185">Reference proteome</keyword>
<keyword id="KW-0808">Transferase</keyword>
<comment type="function">
    <text evidence="1">Essential for recycling GMP and indirectly, cGMP.</text>
</comment>
<comment type="catalytic activity">
    <reaction>
        <text>GMP + ATP = GDP + ADP</text>
        <dbReference type="Rhea" id="RHEA:20780"/>
        <dbReference type="ChEBI" id="CHEBI:30616"/>
        <dbReference type="ChEBI" id="CHEBI:58115"/>
        <dbReference type="ChEBI" id="CHEBI:58189"/>
        <dbReference type="ChEBI" id="CHEBI:456216"/>
        <dbReference type="EC" id="2.7.4.8"/>
    </reaction>
</comment>
<comment type="subcellular location">
    <subcellularLocation>
        <location evidence="1">Cytoplasm</location>
    </subcellularLocation>
</comment>
<comment type="similarity">
    <text evidence="2">Belongs to the guanylate kinase family.</text>
</comment>
<gene>
    <name type="primary">gmk</name>
    <name type="ordered locus">RP765</name>
</gene>
<feature type="chain" id="PRO_0000170596" description="Guanylate kinase">
    <location>
        <begin position="1"/>
        <end position="197"/>
    </location>
</feature>
<feature type="domain" description="Guanylate kinase-like">
    <location>
        <begin position="7"/>
        <end position="185"/>
    </location>
</feature>
<feature type="binding site" evidence="1">
    <location>
        <begin position="14"/>
        <end position="21"/>
    </location>
    <ligand>
        <name>ATP</name>
        <dbReference type="ChEBI" id="CHEBI:30616"/>
    </ligand>
</feature>